<evidence type="ECO:0000250" key="1"/>
<evidence type="ECO:0000269" key="2">
    <source>
    </source>
</evidence>
<evidence type="ECO:0000269" key="3">
    <source>
    </source>
</evidence>
<evidence type="ECO:0000305" key="4"/>
<sequence length="135" mass="15099">MVSFRTMWSVVVVVVVASLASSGVQGRSVEGSSRMERLLSSGSSSSEPLSFLSQDQSVNKRQVFDQACKGIYDRAIFKKLDRVCEDCYNLYRKPYVATTCRQNCYANSVFRQCLDDLLLIDVLDEYISGVQTVGK</sequence>
<protein>
    <recommendedName>
        <fullName>Crustacean hyperglycemic hormones A*</fullName>
        <shortName>CHH A*</shortName>
    </recommendedName>
    <component>
        <recommendedName>
            <fullName>CHH precursor-related peptide A*</fullName>
            <shortName>CPRP A*</shortName>
        </recommendedName>
    </component>
    <component>
        <recommendedName>
            <fullName>Crustacean hyperglycemic hormone</fullName>
            <shortName>CHH</shortName>
        </recommendedName>
    </component>
</protein>
<feature type="signal peptide" evidence="2">
    <location>
        <begin position="1"/>
        <end position="26"/>
    </location>
</feature>
<feature type="peptide" id="PRO_0000019049" description="CHH precursor-related peptide A*">
    <location>
        <begin position="27"/>
        <end position="59"/>
    </location>
</feature>
<feature type="peptide" id="PRO_0000019050" description="Crustacean hyperglycemic hormone">
    <location>
        <begin position="62"/>
        <end position="133"/>
    </location>
</feature>
<feature type="modified residue" description="Pyrrolidone carboxylic acid" evidence="3">
    <location>
        <position position="62"/>
    </location>
</feature>
<feature type="modified residue" description="Valine amide" evidence="3">
    <location>
        <position position="133"/>
    </location>
</feature>
<feature type="disulfide bond" evidence="1">
    <location>
        <begin position="68"/>
        <end position="104"/>
    </location>
</feature>
<feature type="disulfide bond" evidence="1">
    <location>
        <begin position="84"/>
        <end position="100"/>
    </location>
</feature>
<feature type="disulfide bond" evidence="1">
    <location>
        <begin position="87"/>
        <end position="113"/>
    </location>
</feature>
<keyword id="KW-0027">Amidation</keyword>
<keyword id="KW-0119">Carbohydrate metabolism</keyword>
<keyword id="KW-0165">Cleavage on pair of basic residues</keyword>
<keyword id="KW-0903">Direct protein sequencing</keyword>
<keyword id="KW-1015">Disulfide bond</keyword>
<keyword id="KW-0313">Glucose metabolism</keyword>
<keyword id="KW-0372">Hormone</keyword>
<keyword id="KW-0527">Neuropeptide</keyword>
<keyword id="KW-0873">Pyrrolidone carboxylic acid</keyword>
<keyword id="KW-0964">Secreted</keyword>
<keyword id="KW-0732">Signal</keyword>
<accession>Q25588</accession>
<dbReference type="EMBL" id="X80534">
    <property type="protein sequence ID" value="CAA56674.1"/>
    <property type="molecule type" value="mRNA"/>
</dbReference>
<dbReference type="PIR" id="S48142">
    <property type="entry name" value="S48142"/>
</dbReference>
<dbReference type="SMR" id="Q25588"/>
<dbReference type="GO" id="GO:0005576">
    <property type="term" value="C:extracellular region"/>
    <property type="evidence" value="ECO:0007669"/>
    <property type="project" value="UniProtKB-SubCell"/>
</dbReference>
<dbReference type="GO" id="GO:0005184">
    <property type="term" value="F:neuropeptide hormone activity"/>
    <property type="evidence" value="ECO:0007669"/>
    <property type="project" value="InterPro"/>
</dbReference>
<dbReference type="GO" id="GO:0007623">
    <property type="term" value="P:circadian rhythm"/>
    <property type="evidence" value="ECO:0007669"/>
    <property type="project" value="TreeGrafter"/>
</dbReference>
<dbReference type="GO" id="GO:0006006">
    <property type="term" value="P:glucose metabolic process"/>
    <property type="evidence" value="ECO:0007669"/>
    <property type="project" value="UniProtKB-KW"/>
</dbReference>
<dbReference type="GO" id="GO:0007218">
    <property type="term" value="P:neuropeptide signaling pathway"/>
    <property type="evidence" value="ECO:0007669"/>
    <property type="project" value="UniProtKB-KW"/>
</dbReference>
<dbReference type="Gene3D" id="1.10.2010.10">
    <property type="entry name" value="Crustacean CHH/MIH/GIH neurohormone"/>
    <property type="match status" value="1"/>
</dbReference>
<dbReference type="InterPro" id="IPR018251">
    <property type="entry name" value="Crust_neurhormone_CS"/>
</dbReference>
<dbReference type="InterPro" id="IPR031098">
    <property type="entry name" value="Crust_neurohorm"/>
</dbReference>
<dbReference type="InterPro" id="IPR035957">
    <property type="entry name" value="Crust_neurohorm_sf"/>
</dbReference>
<dbReference type="InterPro" id="IPR001166">
    <property type="entry name" value="Hyperglycemic"/>
</dbReference>
<dbReference type="InterPro" id="IPR000346">
    <property type="entry name" value="Hyperglycemic1"/>
</dbReference>
<dbReference type="PANTHER" id="PTHR35981">
    <property type="entry name" value="ION TRANSPORT PEPTIDE, ISOFORM C"/>
    <property type="match status" value="1"/>
</dbReference>
<dbReference type="PANTHER" id="PTHR35981:SF2">
    <property type="entry name" value="ION TRANSPORT PEPTIDE, ISOFORM C"/>
    <property type="match status" value="1"/>
</dbReference>
<dbReference type="Pfam" id="PF01147">
    <property type="entry name" value="Crust_neurohorm"/>
    <property type="match status" value="1"/>
</dbReference>
<dbReference type="PRINTS" id="PR00548">
    <property type="entry name" value="HYPRGLYCEMC1"/>
</dbReference>
<dbReference type="PRINTS" id="PR00550">
    <property type="entry name" value="HYPRGLYCEMIC"/>
</dbReference>
<dbReference type="SUPFAM" id="SSF81778">
    <property type="entry name" value="Crustacean CHH/MIH/GIH neurohormone"/>
    <property type="match status" value="1"/>
</dbReference>
<dbReference type="PROSITE" id="PS01250">
    <property type="entry name" value="CHH_MIH_GIH"/>
    <property type="match status" value="1"/>
</dbReference>
<reference key="1">
    <citation type="journal article" date="1994" name="Eur. J. Biochem.">
        <title>Cloning and expression of two crustacean hyperglycemic-hormone mRNAs in the eyestalk of the crayfish Orconectes limosus.</title>
        <authorList>
            <person name="de Kleijn D.P.V."/>
            <person name="Janssen K.P.C."/>
            <person name="Martens G.J.M."/>
            <person name="van Herp F."/>
        </authorList>
    </citation>
    <scope>NUCLEOTIDE SEQUENCE [MRNA]</scope>
</reference>
<reference key="2">
    <citation type="journal article" date="1991" name="Peptides">
        <title>Isolation and amino acid sequence of crustacean hyperglycemic hormone precursor-related peptides.</title>
        <authorList>
            <person name="Tensen C.P."/>
            <person name="Verhoeven A.H.M."/>
            <person name="Gaus G."/>
            <person name="Janssen K.P.C."/>
            <person name="Keller R."/>
            <person name="van Herp F."/>
        </authorList>
    </citation>
    <scope>PROTEIN SEQUENCE OF 27-59</scope>
    <source>
        <tissue>Sinus gland</tissue>
    </source>
</reference>
<reference key="3">
    <citation type="journal article" date="1991" name="Peptides">
        <title>Amino acid sequence of crustacean hyperglycemic hormone (CHH) from the crayfish, Orconectes limosus: emergence of a novel neuropeptide family.</title>
        <authorList>
            <person name="Kegel G."/>
            <person name="Reichwein B."/>
            <person name="Tensen C.P."/>
            <person name="Keller R."/>
        </authorList>
    </citation>
    <scope>PROTEIN SEQUENCE OF 62-133</scope>
    <scope>PYROGLUTAMATE FORMATION AT GLN-62</scope>
    <scope>AMIDATION AT VAL-133</scope>
    <source>
        <tissue>Sinus gland</tissue>
    </source>
</reference>
<comment type="function">
    <text>Hormone found in the sinus gland of isopods and decapods which controls the blood sugar level. Has a secretagogue action over the amylase released from the midgut gland. May act as a stress hormone and may be involved in the control of molting and reproduction.</text>
</comment>
<comment type="subcellular location">
    <subcellularLocation>
        <location>Secreted</location>
    </subcellularLocation>
</comment>
<comment type="tissue specificity">
    <text>Produced by the medulla terminalis X-organ in the eyestalks and transported to the sinus gland where they are stored and released.</text>
</comment>
<comment type="similarity">
    <text evidence="4">Belongs to the arthropod CHH/MIH/GIH/VIH hormone family.</text>
</comment>
<gene>
    <name type="primary">CHHA*</name>
</gene>
<organism>
    <name type="scientific">Faxonius limosus</name>
    <name type="common">Spinycheek crayfish</name>
    <name type="synonym">Orconectes limosus</name>
    <dbReference type="NCBI Taxonomy" id="28379"/>
    <lineage>
        <taxon>Eukaryota</taxon>
        <taxon>Metazoa</taxon>
        <taxon>Ecdysozoa</taxon>
        <taxon>Arthropoda</taxon>
        <taxon>Crustacea</taxon>
        <taxon>Multicrustacea</taxon>
        <taxon>Malacostraca</taxon>
        <taxon>Eumalacostraca</taxon>
        <taxon>Eucarida</taxon>
        <taxon>Decapoda</taxon>
        <taxon>Pleocyemata</taxon>
        <taxon>Astacidea</taxon>
        <taxon>Astacoidea</taxon>
        <taxon>Cambaridae</taxon>
        <taxon>Faxonius</taxon>
    </lineage>
</organism>
<name>CHH2_FAXLI</name>
<proteinExistence type="evidence at protein level"/>